<proteinExistence type="inferred from homology"/>
<accession>A9ABD7</accession>
<organism>
    <name type="scientific">Burkholderia multivorans (strain ATCC 17616 / 249)</name>
    <dbReference type="NCBI Taxonomy" id="395019"/>
    <lineage>
        <taxon>Bacteria</taxon>
        <taxon>Pseudomonadati</taxon>
        <taxon>Pseudomonadota</taxon>
        <taxon>Betaproteobacteria</taxon>
        <taxon>Burkholderiales</taxon>
        <taxon>Burkholderiaceae</taxon>
        <taxon>Burkholderia</taxon>
        <taxon>Burkholderia cepacia complex</taxon>
    </lineage>
</organism>
<reference key="1">
    <citation type="submission" date="2007-10" db="EMBL/GenBank/DDBJ databases">
        <title>Complete sequence of chromosome 1 of Burkholderia multivorans ATCC 17616.</title>
        <authorList>
            <person name="Copeland A."/>
            <person name="Lucas S."/>
            <person name="Lapidus A."/>
            <person name="Barry K."/>
            <person name="Glavina del Rio T."/>
            <person name="Dalin E."/>
            <person name="Tice H."/>
            <person name="Pitluck S."/>
            <person name="Chain P."/>
            <person name="Malfatti S."/>
            <person name="Shin M."/>
            <person name="Vergez L."/>
            <person name="Schmutz J."/>
            <person name="Larimer F."/>
            <person name="Land M."/>
            <person name="Hauser L."/>
            <person name="Kyrpides N."/>
            <person name="Kim E."/>
            <person name="Tiedje J."/>
            <person name="Richardson P."/>
        </authorList>
    </citation>
    <scope>NUCLEOTIDE SEQUENCE [LARGE SCALE GENOMIC DNA]</scope>
    <source>
        <strain>ATCC 17616 / 249</strain>
    </source>
</reference>
<reference key="2">
    <citation type="submission" date="2007-04" db="EMBL/GenBank/DDBJ databases">
        <title>Complete genome sequence of Burkholderia multivorans ATCC 17616.</title>
        <authorList>
            <person name="Ohtsubo Y."/>
            <person name="Yamashita A."/>
            <person name="Kurokawa K."/>
            <person name="Takami H."/>
            <person name="Yuhara S."/>
            <person name="Nishiyama E."/>
            <person name="Endo R."/>
            <person name="Miyazaki R."/>
            <person name="Ono A."/>
            <person name="Yano K."/>
            <person name="Ito M."/>
            <person name="Sota M."/>
            <person name="Yuji N."/>
            <person name="Hattori M."/>
            <person name="Tsuda M."/>
        </authorList>
    </citation>
    <scope>NUCLEOTIDE SEQUENCE [LARGE SCALE GENOMIC DNA]</scope>
    <source>
        <strain>ATCC 17616 / 249</strain>
    </source>
</reference>
<protein>
    <recommendedName>
        <fullName evidence="1">Ribosome maturation factor RimP</fullName>
    </recommendedName>
</protein>
<dbReference type="EMBL" id="CP000868">
    <property type="protein sequence ID" value="ABX15445.1"/>
    <property type="molecule type" value="Genomic_DNA"/>
</dbReference>
<dbReference type="EMBL" id="AP009385">
    <property type="protein sequence ID" value="BAG43412.1"/>
    <property type="molecule type" value="Genomic_DNA"/>
</dbReference>
<dbReference type="RefSeq" id="WP_006402064.1">
    <property type="nucleotide sequence ID" value="NC_010804.1"/>
</dbReference>
<dbReference type="SMR" id="A9ABD7"/>
<dbReference type="STRING" id="395019.BMULJ_01483"/>
<dbReference type="GeneID" id="89569938"/>
<dbReference type="KEGG" id="bmj:BMULJ_01483"/>
<dbReference type="KEGG" id="bmu:Bmul_1757"/>
<dbReference type="eggNOG" id="COG0779">
    <property type="taxonomic scope" value="Bacteria"/>
</dbReference>
<dbReference type="HOGENOM" id="CLU_070525_1_0_4"/>
<dbReference type="Proteomes" id="UP000008815">
    <property type="component" value="Chromosome 1"/>
</dbReference>
<dbReference type="GO" id="GO:0005829">
    <property type="term" value="C:cytosol"/>
    <property type="evidence" value="ECO:0007669"/>
    <property type="project" value="TreeGrafter"/>
</dbReference>
<dbReference type="GO" id="GO:0000028">
    <property type="term" value="P:ribosomal small subunit assembly"/>
    <property type="evidence" value="ECO:0007669"/>
    <property type="project" value="TreeGrafter"/>
</dbReference>
<dbReference type="GO" id="GO:0006412">
    <property type="term" value="P:translation"/>
    <property type="evidence" value="ECO:0007669"/>
    <property type="project" value="TreeGrafter"/>
</dbReference>
<dbReference type="CDD" id="cd01734">
    <property type="entry name" value="YlxS_C"/>
    <property type="match status" value="1"/>
</dbReference>
<dbReference type="Gene3D" id="2.30.30.180">
    <property type="entry name" value="Ribosome maturation factor RimP, C-terminal domain"/>
    <property type="match status" value="1"/>
</dbReference>
<dbReference type="Gene3D" id="3.30.300.70">
    <property type="entry name" value="RimP-like superfamily, N-terminal"/>
    <property type="match status" value="1"/>
</dbReference>
<dbReference type="HAMAP" id="MF_01077">
    <property type="entry name" value="RimP"/>
    <property type="match status" value="1"/>
</dbReference>
<dbReference type="InterPro" id="IPR003728">
    <property type="entry name" value="Ribosome_maturation_RimP"/>
</dbReference>
<dbReference type="InterPro" id="IPR028998">
    <property type="entry name" value="RimP_C"/>
</dbReference>
<dbReference type="InterPro" id="IPR036847">
    <property type="entry name" value="RimP_C_sf"/>
</dbReference>
<dbReference type="InterPro" id="IPR028989">
    <property type="entry name" value="RimP_N"/>
</dbReference>
<dbReference type="InterPro" id="IPR035956">
    <property type="entry name" value="RimP_N_sf"/>
</dbReference>
<dbReference type="NCBIfam" id="NF000929">
    <property type="entry name" value="PRK00092.2-1"/>
    <property type="match status" value="1"/>
</dbReference>
<dbReference type="PANTHER" id="PTHR33867">
    <property type="entry name" value="RIBOSOME MATURATION FACTOR RIMP"/>
    <property type="match status" value="1"/>
</dbReference>
<dbReference type="PANTHER" id="PTHR33867:SF1">
    <property type="entry name" value="RIBOSOME MATURATION FACTOR RIMP"/>
    <property type="match status" value="1"/>
</dbReference>
<dbReference type="Pfam" id="PF17384">
    <property type="entry name" value="DUF150_C"/>
    <property type="match status" value="1"/>
</dbReference>
<dbReference type="Pfam" id="PF02576">
    <property type="entry name" value="RimP_N"/>
    <property type="match status" value="1"/>
</dbReference>
<dbReference type="SUPFAM" id="SSF74942">
    <property type="entry name" value="YhbC-like, C-terminal domain"/>
    <property type="match status" value="1"/>
</dbReference>
<dbReference type="SUPFAM" id="SSF75420">
    <property type="entry name" value="YhbC-like, N-terminal domain"/>
    <property type="match status" value="1"/>
</dbReference>
<gene>
    <name evidence="1" type="primary">rimP</name>
    <name type="ordered locus">Bmul_1757</name>
    <name type="ordered locus">BMULJ_01483</name>
</gene>
<sequence length="152" mass="17139">MQLTELIETTVTGLGYELVDLERTGRGMLCVYIDQPAGISLEDCEKVTRQLQHVLTVENIDYERLEVSSPGLDRPLKKLADFERFAGSEVSVTLKKPLDGRKTYRGILHAPNGETIGLEFERKKGEAAMLDFTLADIDKARLIPQVDFRSRK</sequence>
<name>RIMP_BURM1</name>
<keyword id="KW-0963">Cytoplasm</keyword>
<keyword id="KW-1185">Reference proteome</keyword>
<keyword id="KW-0690">Ribosome biogenesis</keyword>
<evidence type="ECO:0000255" key="1">
    <source>
        <dbReference type="HAMAP-Rule" id="MF_01077"/>
    </source>
</evidence>
<comment type="function">
    <text evidence="1">Required for maturation of 30S ribosomal subunits.</text>
</comment>
<comment type="subcellular location">
    <subcellularLocation>
        <location evidence="1">Cytoplasm</location>
    </subcellularLocation>
</comment>
<comment type="similarity">
    <text evidence="1">Belongs to the RimP family.</text>
</comment>
<feature type="chain" id="PRO_1000136741" description="Ribosome maturation factor RimP">
    <location>
        <begin position="1"/>
        <end position="152"/>
    </location>
</feature>